<sequence length="227" mass="25374">MVFGLSRAIRKAEKNAIIAELKVYSPKYGDLLKGRNPFEILRAYERAGAVGISYITDPKYFRGSFEFLRKLCRETELPVLRKDFIASKEEVERTAEAGASAVLLITRLLKEELPEFVDFAKEHGLDTLVEVHSEEELAIALQTDSTMIGINNRDIGKLELDDGNVSLTEKLAPLIPKRYVKVSESGIAGTEDLKRALRHADAALIGTALMKTPDPEEFLRKLVEVEV</sequence>
<accession>Q9YGB5</accession>
<accession>Q5JFU4</accession>
<name>TRPC_THEKO</name>
<protein>
    <recommendedName>
        <fullName>Indole-3-glycerol phosphate synthase</fullName>
        <shortName>IGPS</shortName>
        <ecNumber>4.1.1.48</ecNumber>
    </recommendedName>
</protein>
<comment type="catalytic activity">
    <reaction>
        <text>1-(2-carboxyphenylamino)-1-deoxy-D-ribulose 5-phosphate + H(+) = (1S,2R)-1-C-(indol-3-yl)glycerol 3-phosphate + CO2 + H2O</text>
        <dbReference type="Rhea" id="RHEA:23476"/>
        <dbReference type="ChEBI" id="CHEBI:15377"/>
        <dbReference type="ChEBI" id="CHEBI:15378"/>
        <dbReference type="ChEBI" id="CHEBI:16526"/>
        <dbReference type="ChEBI" id="CHEBI:58613"/>
        <dbReference type="ChEBI" id="CHEBI:58866"/>
        <dbReference type="EC" id="4.1.1.48"/>
    </reaction>
</comment>
<comment type="pathway">
    <text>Amino-acid biosynthesis; L-tryptophan biosynthesis; L-tryptophan from chorismate: step 4/5.</text>
</comment>
<comment type="similarity">
    <text evidence="1">Belongs to the TrpC family.</text>
</comment>
<evidence type="ECO:0000305" key="1"/>
<gene>
    <name type="primary">trpC</name>
    <name type="ordered locus">TK0252</name>
</gene>
<keyword id="KW-0028">Amino-acid biosynthesis</keyword>
<keyword id="KW-0057">Aromatic amino acid biosynthesis</keyword>
<keyword id="KW-0210">Decarboxylase</keyword>
<keyword id="KW-0456">Lyase</keyword>
<keyword id="KW-1185">Reference proteome</keyword>
<keyword id="KW-0822">Tryptophan biosynthesis</keyword>
<proteinExistence type="inferred from homology"/>
<dbReference type="EC" id="4.1.1.48"/>
<dbReference type="EMBL" id="AB030011">
    <property type="protein sequence ID" value="BAA82545.1"/>
    <property type="molecule type" value="Genomic_DNA"/>
</dbReference>
<dbReference type="EMBL" id="AP006878">
    <property type="protein sequence ID" value="BAD84441.1"/>
    <property type="molecule type" value="Genomic_DNA"/>
</dbReference>
<dbReference type="PIR" id="T43922">
    <property type="entry name" value="T43922"/>
</dbReference>
<dbReference type="SMR" id="Q9YGB5"/>
<dbReference type="FunCoup" id="Q9YGB5">
    <property type="interactions" value="92"/>
</dbReference>
<dbReference type="STRING" id="69014.TK0252"/>
<dbReference type="EnsemblBacteria" id="BAD84441">
    <property type="protein sequence ID" value="BAD84441"/>
    <property type="gene ID" value="TK0252"/>
</dbReference>
<dbReference type="KEGG" id="tko:TK0252"/>
<dbReference type="PATRIC" id="fig|69014.16.peg.251"/>
<dbReference type="eggNOG" id="arCOG01088">
    <property type="taxonomic scope" value="Archaea"/>
</dbReference>
<dbReference type="HOGENOM" id="CLU_034247_0_1_2"/>
<dbReference type="InParanoid" id="Q9YGB5"/>
<dbReference type="PhylomeDB" id="Q9YGB5"/>
<dbReference type="BioCyc" id="MetaCyc:MONOMER-3581"/>
<dbReference type="BRENDA" id="4.1.1.48">
    <property type="organism ID" value="5246"/>
</dbReference>
<dbReference type="UniPathway" id="UPA00035">
    <property type="reaction ID" value="UER00043"/>
</dbReference>
<dbReference type="Proteomes" id="UP000000536">
    <property type="component" value="Chromosome"/>
</dbReference>
<dbReference type="GO" id="GO:0004425">
    <property type="term" value="F:indole-3-glycerol-phosphate synthase activity"/>
    <property type="evidence" value="ECO:0000318"/>
    <property type="project" value="GO_Central"/>
</dbReference>
<dbReference type="GO" id="GO:0004640">
    <property type="term" value="F:phosphoribosylanthranilate isomerase activity"/>
    <property type="evidence" value="ECO:0000318"/>
    <property type="project" value="GO_Central"/>
</dbReference>
<dbReference type="GO" id="GO:0000162">
    <property type="term" value="P:L-tryptophan biosynthetic process"/>
    <property type="evidence" value="ECO:0000318"/>
    <property type="project" value="GO_Central"/>
</dbReference>
<dbReference type="CDD" id="cd00331">
    <property type="entry name" value="IGPS"/>
    <property type="match status" value="1"/>
</dbReference>
<dbReference type="Gene3D" id="3.20.20.70">
    <property type="entry name" value="Aldolase class I"/>
    <property type="match status" value="1"/>
</dbReference>
<dbReference type="HAMAP" id="MF_00134_A">
    <property type="entry name" value="IGPS_A"/>
    <property type="match status" value="1"/>
</dbReference>
<dbReference type="InterPro" id="IPR013785">
    <property type="entry name" value="Aldolase_TIM"/>
</dbReference>
<dbReference type="InterPro" id="IPR045186">
    <property type="entry name" value="Indole-3-glycerol_P_synth"/>
</dbReference>
<dbReference type="InterPro" id="IPR013798">
    <property type="entry name" value="Indole-3-glycerol_P_synth_dom"/>
</dbReference>
<dbReference type="InterPro" id="IPR001468">
    <property type="entry name" value="Indole-3-GlycerolPSynthase_CS"/>
</dbReference>
<dbReference type="InterPro" id="IPR011060">
    <property type="entry name" value="RibuloseP-bd_barrel"/>
</dbReference>
<dbReference type="NCBIfam" id="NF001376">
    <property type="entry name" value="PRK00278.2-3"/>
    <property type="match status" value="1"/>
</dbReference>
<dbReference type="PANTHER" id="PTHR22854:SF2">
    <property type="entry name" value="INDOLE-3-GLYCEROL-PHOSPHATE SYNTHASE"/>
    <property type="match status" value="1"/>
</dbReference>
<dbReference type="PANTHER" id="PTHR22854">
    <property type="entry name" value="TRYPTOPHAN BIOSYNTHESIS PROTEIN"/>
    <property type="match status" value="1"/>
</dbReference>
<dbReference type="Pfam" id="PF00218">
    <property type="entry name" value="IGPS"/>
    <property type="match status" value="1"/>
</dbReference>
<dbReference type="SUPFAM" id="SSF51366">
    <property type="entry name" value="Ribulose-phoshate binding barrel"/>
    <property type="match status" value="1"/>
</dbReference>
<dbReference type="PROSITE" id="PS00614">
    <property type="entry name" value="IGPS"/>
    <property type="match status" value="1"/>
</dbReference>
<reference key="1">
    <citation type="journal article" date="1999" name="Mol. Gen. Genet.">
        <title>The tryptophan biosynthesis gene cluster trpCDEGFBA from Pyrococcus kodakaraensis KOD1 is regulated at the transcriptional level and expressed as a single mRNA.</title>
        <authorList>
            <person name="Tang X."/>
            <person name="Ezaki S."/>
            <person name="Fujiwara S."/>
            <person name="Takagi M."/>
            <person name="Atomi H."/>
            <person name="Imanaka T."/>
        </authorList>
    </citation>
    <scope>NUCLEOTIDE SEQUENCE [GENOMIC DNA]</scope>
    <source>
        <strain>ATCC BAA-918 / JCM 12380 / KOD1</strain>
    </source>
</reference>
<reference key="2">
    <citation type="journal article" date="2005" name="Genome Res.">
        <title>Complete genome sequence of the hyperthermophilic archaeon Thermococcus kodakaraensis KOD1 and comparison with Pyrococcus genomes.</title>
        <authorList>
            <person name="Fukui T."/>
            <person name="Atomi H."/>
            <person name="Kanai T."/>
            <person name="Matsumi R."/>
            <person name="Fujiwara S."/>
            <person name="Imanaka T."/>
        </authorList>
    </citation>
    <scope>NUCLEOTIDE SEQUENCE [LARGE SCALE GENOMIC DNA]</scope>
    <source>
        <strain>ATCC BAA-918 / JCM 12380 / KOD1</strain>
    </source>
</reference>
<organism>
    <name type="scientific">Thermococcus kodakarensis (strain ATCC BAA-918 / JCM 12380 / KOD1)</name>
    <name type="common">Pyrococcus kodakaraensis (strain KOD1)</name>
    <dbReference type="NCBI Taxonomy" id="69014"/>
    <lineage>
        <taxon>Archaea</taxon>
        <taxon>Methanobacteriati</taxon>
        <taxon>Methanobacteriota</taxon>
        <taxon>Thermococci</taxon>
        <taxon>Thermococcales</taxon>
        <taxon>Thermococcaceae</taxon>
        <taxon>Thermococcus</taxon>
    </lineage>
</organism>
<feature type="chain" id="PRO_0000154300" description="Indole-3-glycerol phosphate synthase">
    <location>
        <begin position="1"/>
        <end position="227"/>
    </location>
</feature>
<feature type="sequence conflict" description="In Ref. 1; BAA82545." evidence="1" ref="1">
    <original>P</original>
    <variation>R</variation>
    <location>
        <position position="215"/>
    </location>
</feature>